<evidence type="ECO:0000255" key="1">
    <source>
        <dbReference type="HAMAP-Rule" id="MF_00091"/>
    </source>
</evidence>
<gene>
    <name evidence="1" type="primary">luxS</name>
    <name type="ordered locus">SA1936</name>
</gene>
<reference key="1">
    <citation type="journal article" date="2001" name="Lancet">
        <title>Whole genome sequencing of meticillin-resistant Staphylococcus aureus.</title>
        <authorList>
            <person name="Kuroda M."/>
            <person name="Ohta T."/>
            <person name="Uchiyama I."/>
            <person name="Baba T."/>
            <person name="Yuzawa H."/>
            <person name="Kobayashi I."/>
            <person name="Cui L."/>
            <person name="Oguchi A."/>
            <person name="Aoki K."/>
            <person name="Nagai Y."/>
            <person name="Lian J.-Q."/>
            <person name="Ito T."/>
            <person name="Kanamori M."/>
            <person name="Matsumaru H."/>
            <person name="Maruyama A."/>
            <person name="Murakami H."/>
            <person name="Hosoyama A."/>
            <person name="Mizutani-Ui Y."/>
            <person name="Takahashi N.K."/>
            <person name="Sawano T."/>
            <person name="Inoue R."/>
            <person name="Kaito C."/>
            <person name="Sekimizu K."/>
            <person name="Hirakawa H."/>
            <person name="Kuhara S."/>
            <person name="Goto S."/>
            <person name="Yabuzaki J."/>
            <person name="Kanehisa M."/>
            <person name="Yamashita A."/>
            <person name="Oshima K."/>
            <person name="Furuya K."/>
            <person name="Yoshino C."/>
            <person name="Shiba T."/>
            <person name="Hattori M."/>
            <person name="Ogasawara N."/>
            <person name="Hayashi H."/>
            <person name="Hiramatsu K."/>
        </authorList>
    </citation>
    <scope>NUCLEOTIDE SEQUENCE [LARGE SCALE GENOMIC DNA]</scope>
    <source>
        <strain>N315</strain>
    </source>
</reference>
<reference key="2">
    <citation type="submission" date="2007-10" db="UniProtKB">
        <title>Shotgun proteomic analysis of total and membrane protein extracts of S. aureus strain N315.</title>
        <authorList>
            <person name="Vaezzadeh A.R."/>
            <person name="Deshusses J."/>
            <person name="Lescuyer P."/>
            <person name="Hochstrasser D.F."/>
        </authorList>
    </citation>
    <scope>IDENTIFICATION BY MASS SPECTROMETRY [LARGE SCALE ANALYSIS]</scope>
    <source>
        <strain>N315</strain>
    </source>
</reference>
<sequence>MTKMNVESFNLDHTKVVAPFIRLAGTMEGLNGDVIHKYDIRFKQPNKEHMDMPGLHSLEHLMAENIRNHSDKVVDLSPMGCQTGFYVSFINHDNYDDVLNIVEATLNDVLNATEVPACNEVQCGWAASHSLEGAKTIAQAFLDKRNEWHDVFGTGK</sequence>
<keyword id="KW-0071">Autoinducer synthesis</keyword>
<keyword id="KW-0408">Iron</keyword>
<keyword id="KW-0456">Lyase</keyword>
<keyword id="KW-0479">Metal-binding</keyword>
<keyword id="KW-0673">Quorum sensing</keyword>
<proteinExistence type="evidence at protein level"/>
<accession>P65330</accession>
<accession>Q99SC5</accession>
<dbReference type="EC" id="4.4.1.21" evidence="1"/>
<dbReference type="EMBL" id="BA000018">
    <property type="protein sequence ID" value="BAB43220.1"/>
    <property type="molecule type" value="Genomic_DNA"/>
</dbReference>
<dbReference type="PIR" id="C90007">
    <property type="entry name" value="C90007"/>
</dbReference>
<dbReference type="RefSeq" id="WP_000164421.1">
    <property type="nucleotide sequence ID" value="NC_002745.2"/>
</dbReference>
<dbReference type="SMR" id="P65330"/>
<dbReference type="EnsemblBacteria" id="BAB43220">
    <property type="protein sequence ID" value="BAB43220"/>
    <property type="gene ID" value="BAB43220"/>
</dbReference>
<dbReference type="KEGG" id="sau:SA1936"/>
<dbReference type="HOGENOM" id="CLU_107531_2_0_9"/>
<dbReference type="GO" id="GO:0005506">
    <property type="term" value="F:iron ion binding"/>
    <property type="evidence" value="ECO:0007669"/>
    <property type="project" value="InterPro"/>
</dbReference>
<dbReference type="GO" id="GO:0043768">
    <property type="term" value="F:S-ribosylhomocysteine lyase activity"/>
    <property type="evidence" value="ECO:0007669"/>
    <property type="project" value="UniProtKB-UniRule"/>
</dbReference>
<dbReference type="GO" id="GO:0009372">
    <property type="term" value="P:quorum sensing"/>
    <property type="evidence" value="ECO:0007669"/>
    <property type="project" value="UniProtKB-UniRule"/>
</dbReference>
<dbReference type="Gene3D" id="3.30.1360.80">
    <property type="entry name" value="S-ribosylhomocysteinase (LuxS)"/>
    <property type="match status" value="1"/>
</dbReference>
<dbReference type="HAMAP" id="MF_00091">
    <property type="entry name" value="LuxS"/>
    <property type="match status" value="1"/>
</dbReference>
<dbReference type="InterPro" id="IPR037005">
    <property type="entry name" value="LuxS_sf"/>
</dbReference>
<dbReference type="InterPro" id="IPR011249">
    <property type="entry name" value="Metalloenz_LuxS/M16"/>
</dbReference>
<dbReference type="InterPro" id="IPR003815">
    <property type="entry name" value="S-ribosylhomocysteinase"/>
</dbReference>
<dbReference type="NCBIfam" id="NF002604">
    <property type="entry name" value="PRK02260.1-4"/>
    <property type="match status" value="1"/>
</dbReference>
<dbReference type="PANTHER" id="PTHR35799">
    <property type="entry name" value="S-RIBOSYLHOMOCYSTEINE LYASE"/>
    <property type="match status" value="1"/>
</dbReference>
<dbReference type="PANTHER" id="PTHR35799:SF1">
    <property type="entry name" value="S-RIBOSYLHOMOCYSTEINE LYASE"/>
    <property type="match status" value="1"/>
</dbReference>
<dbReference type="Pfam" id="PF02664">
    <property type="entry name" value="LuxS"/>
    <property type="match status" value="1"/>
</dbReference>
<dbReference type="PIRSF" id="PIRSF006160">
    <property type="entry name" value="AI2"/>
    <property type="match status" value="1"/>
</dbReference>
<dbReference type="PRINTS" id="PR01487">
    <property type="entry name" value="LUXSPROTEIN"/>
</dbReference>
<dbReference type="SUPFAM" id="SSF63411">
    <property type="entry name" value="LuxS/MPP-like metallohydrolase"/>
    <property type="match status" value="1"/>
</dbReference>
<organism>
    <name type="scientific">Staphylococcus aureus (strain N315)</name>
    <dbReference type="NCBI Taxonomy" id="158879"/>
    <lineage>
        <taxon>Bacteria</taxon>
        <taxon>Bacillati</taxon>
        <taxon>Bacillota</taxon>
        <taxon>Bacilli</taxon>
        <taxon>Bacillales</taxon>
        <taxon>Staphylococcaceae</taxon>
        <taxon>Staphylococcus</taxon>
    </lineage>
</organism>
<name>LUXS_STAAN</name>
<comment type="function">
    <text evidence="1">Involved in the synthesis of autoinducer 2 (AI-2) which is secreted by bacteria and is used to communicate both the cell density and the metabolic potential of the environment. The regulation of gene expression in response to changes in cell density is called quorum sensing. Catalyzes the transformation of S-ribosylhomocysteine (RHC) to homocysteine (HC) and 4,5-dihydroxy-2,3-pentadione (DPD).</text>
</comment>
<comment type="catalytic activity">
    <reaction evidence="1">
        <text>S-(5-deoxy-D-ribos-5-yl)-L-homocysteine = (S)-4,5-dihydroxypentane-2,3-dione + L-homocysteine</text>
        <dbReference type="Rhea" id="RHEA:17753"/>
        <dbReference type="ChEBI" id="CHEBI:29484"/>
        <dbReference type="ChEBI" id="CHEBI:58195"/>
        <dbReference type="ChEBI" id="CHEBI:58199"/>
        <dbReference type="EC" id="4.4.1.21"/>
    </reaction>
</comment>
<comment type="cofactor">
    <cofactor evidence="1">
        <name>Fe cation</name>
        <dbReference type="ChEBI" id="CHEBI:24875"/>
    </cofactor>
    <text evidence="1">Binds 1 Fe cation per subunit.</text>
</comment>
<comment type="subunit">
    <text evidence="1">Homodimer.</text>
</comment>
<comment type="similarity">
    <text evidence="1">Belongs to the LuxS family.</text>
</comment>
<feature type="chain" id="PRO_0000172255" description="S-ribosylhomocysteine lyase">
    <location>
        <begin position="1"/>
        <end position="156"/>
    </location>
</feature>
<feature type="binding site" evidence="1">
    <location>
        <position position="56"/>
    </location>
    <ligand>
        <name>Fe cation</name>
        <dbReference type="ChEBI" id="CHEBI:24875"/>
    </ligand>
</feature>
<feature type="binding site" evidence="1">
    <location>
        <position position="60"/>
    </location>
    <ligand>
        <name>Fe cation</name>
        <dbReference type="ChEBI" id="CHEBI:24875"/>
    </ligand>
</feature>
<feature type="binding site" evidence="1">
    <location>
        <position position="123"/>
    </location>
    <ligand>
        <name>Fe cation</name>
        <dbReference type="ChEBI" id="CHEBI:24875"/>
    </ligand>
</feature>
<protein>
    <recommendedName>
        <fullName evidence="1">S-ribosylhomocysteine lyase</fullName>
        <ecNumber evidence="1">4.4.1.21</ecNumber>
    </recommendedName>
    <alternativeName>
        <fullName evidence="1">AI-2 synthesis protein</fullName>
    </alternativeName>
    <alternativeName>
        <fullName evidence="1">Autoinducer-2 production protein LuxS</fullName>
    </alternativeName>
</protein>